<organism>
    <name type="scientific">Escherichia coli (strain UTI89 / UPEC)</name>
    <dbReference type="NCBI Taxonomy" id="364106"/>
    <lineage>
        <taxon>Bacteria</taxon>
        <taxon>Pseudomonadati</taxon>
        <taxon>Pseudomonadota</taxon>
        <taxon>Gammaproteobacteria</taxon>
        <taxon>Enterobacterales</taxon>
        <taxon>Enterobacteriaceae</taxon>
        <taxon>Escherichia</taxon>
    </lineage>
</organism>
<protein>
    <recommendedName>
        <fullName evidence="1">Co-chaperone protein HscB</fullName>
    </recommendedName>
    <alternativeName>
        <fullName evidence="1">Hsc20</fullName>
    </alternativeName>
</protein>
<name>HSCB_ECOUT</name>
<comment type="function">
    <text evidence="1">Co-chaperone involved in the maturation of iron-sulfur cluster-containing proteins. Seems to help targeting proteins to be folded toward HscA.</text>
</comment>
<comment type="subunit">
    <text evidence="1">Interacts with HscA and stimulates its ATPase activity. Interacts with IscU.</text>
</comment>
<comment type="similarity">
    <text evidence="1">Belongs to the HscB family.</text>
</comment>
<keyword id="KW-0143">Chaperone</keyword>
<gene>
    <name evidence="1" type="primary">hscB</name>
    <name type="ordered locus">UTI89_C2849</name>
</gene>
<accession>Q1R8K5</accession>
<sequence>MDYFTLFGLPARYQLDTQALSLRFQDLQRQYHPDKFASGSQAEQLAAVQQSATINQAWQTLRHPLMRAEYLLSLHGFDLASEQHTVRDTAFLMEQLELREELDEIEQAKDEARLESFIKRVKKMFDTRHQLMVEQLDNETWDAAADTVRKLRFLDKLRSSAEQLEEKLLDF</sequence>
<proteinExistence type="inferred from homology"/>
<evidence type="ECO:0000255" key="1">
    <source>
        <dbReference type="HAMAP-Rule" id="MF_00682"/>
    </source>
</evidence>
<reference key="1">
    <citation type="journal article" date="2006" name="Proc. Natl. Acad. Sci. U.S.A.">
        <title>Identification of genes subject to positive selection in uropathogenic strains of Escherichia coli: a comparative genomics approach.</title>
        <authorList>
            <person name="Chen S.L."/>
            <person name="Hung C.-S."/>
            <person name="Xu J."/>
            <person name="Reigstad C.S."/>
            <person name="Magrini V."/>
            <person name="Sabo A."/>
            <person name="Blasiar D."/>
            <person name="Bieri T."/>
            <person name="Meyer R.R."/>
            <person name="Ozersky P."/>
            <person name="Armstrong J.R."/>
            <person name="Fulton R.S."/>
            <person name="Latreille J.P."/>
            <person name="Spieth J."/>
            <person name="Hooton T.M."/>
            <person name="Mardis E.R."/>
            <person name="Hultgren S.J."/>
            <person name="Gordon J.I."/>
        </authorList>
    </citation>
    <scope>NUCLEOTIDE SEQUENCE [LARGE SCALE GENOMIC DNA]</scope>
    <source>
        <strain>UTI89 / UPEC</strain>
    </source>
</reference>
<feature type="chain" id="PRO_1000083011" description="Co-chaperone protein HscB">
    <location>
        <begin position="1"/>
        <end position="171"/>
    </location>
</feature>
<feature type="domain" description="J" evidence="1">
    <location>
        <begin position="2"/>
        <end position="74"/>
    </location>
</feature>
<dbReference type="EMBL" id="CP000243">
    <property type="protein sequence ID" value="ABE08309.1"/>
    <property type="molecule type" value="Genomic_DNA"/>
</dbReference>
<dbReference type="RefSeq" id="WP_000384413.1">
    <property type="nucleotide sequence ID" value="NZ_CP064825.1"/>
</dbReference>
<dbReference type="SMR" id="Q1R8K5"/>
<dbReference type="GeneID" id="75172640"/>
<dbReference type="KEGG" id="eci:UTI89_C2849"/>
<dbReference type="HOGENOM" id="CLU_068529_2_0_6"/>
<dbReference type="Proteomes" id="UP000001952">
    <property type="component" value="Chromosome"/>
</dbReference>
<dbReference type="GO" id="GO:1990230">
    <property type="term" value="C:iron-sulfur cluster transfer complex"/>
    <property type="evidence" value="ECO:0007669"/>
    <property type="project" value="TreeGrafter"/>
</dbReference>
<dbReference type="GO" id="GO:0001671">
    <property type="term" value="F:ATPase activator activity"/>
    <property type="evidence" value="ECO:0007669"/>
    <property type="project" value="InterPro"/>
</dbReference>
<dbReference type="GO" id="GO:0051087">
    <property type="term" value="F:protein-folding chaperone binding"/>
    <property type="evidence" value="ECO:0007669"/>
    <property type="project" value="InterPro"/>
</dbReference>
<dbReference type="GO" id="GO:0044571">
    <property type="term" value="P:[2Fe-2S] cluster assembly"/>
    <property type="evidence" value="ECO:0007669"/>
    <property type="project" value="InterPro"/>
</dbReference>
<dbReference type="GO" id="GO:0051259">
    <property type="term" value="P:protein complex oligomerization"/>
    <property type="evidence" value="ECO:0007669"/>
    <property type="project" value="InterPro"/>
</dbReference>
<dbReference type="GO" id="GO:0006457">
    <property type="term" value="P:protein folding"/>
    <property type="evidence" value="ECO:0007669"/>
    <property type="project" value="UniProtKB-UniRule"/>
</dbReference>
<dbReference type="CDD" id="cd06257">
    <property type="entry name" value="DnaJ"/>
    <property type="match status" value="1"/>
</dbReference>
<dbReference type="FunFam" id="1.10.287.110:FF:000008">
    <property type="entry name" value="Co-chaperone protein HscB"/>
    <property type="match status" value="1"/>
</dbReference>
<dbReference type="FunFam" id="1.20.1280.20:FF:000001">
    <property type="entry name" value="Co-chaperone protein HscB"/>
    <property type="match status" value="1"/>
</dbReference>
<dbReference type="Gene3D" id="1.10.287.110">
    <property type="entry name" value="DnaJ domain"/>
    <property type="match status" value="1"/>
</dbReference>
<dbReference type="Gene3D" id="1.20.1280.20">
    <property type="entry name" value="HscB, C-terminal domain"/>
    <property type="match status" value="1"/>
</dbReference>
<dbReference type="HAMAP" id="MF_00682">
    <property type="entry name" value="HscB"/>
    <property type="match status" value="1"/>
</dbReference>
<dbReference type="InterPro" id="IPR001623">
    <property type="entry name" value="DnaJ_domain"/>
</dbReference>
<dbReference type="InterPro" id="IPR004640">
    <property type="entry name" value="HscB"/>
</dbReference>
<dbReference type="InterPro" id="IPR036386">
    <property type="entry name" value="HscB_C_sf"/>
</dbReference>
<dbReference type="InterPro" id="IPR009073">
    <property type="entry name" value="HscB_oligo_C"/>
</dbReference>
<dbReference type="InterPro" id="IPR036869">
    <property type="entry name" value="J_dom_sf"/>
</dbReference>
<dbReference type="NCBIfam" id="TIGR00714">
    <property type="entry name" value="hscB"/>
    <property type="match status" value="1"/>
</dbReference>
<dbReference type="NCBIfam" id="NF003449">
    <property type="entry name" value="PRK05014.1"/>
    <property type="match status" value="1"/>
</dbReference>
<dbReference type="PANTHER" id="PTHR14021">
    <property type="entry name" value="IRON-SULFUR CLUSTER CO-CHAPERONE PROTEIN HSCB"/>
    <property type="match status" value="1"/>
</dbReference>
<dbReference type="PANTHER" id="PTHR14021:SF15">
    <property type="entry name" value="IRON-SULFUR CLUSTER CO-CHAPERONE PROTEIN HSCB"/>
    <property type="match status" value="1"/>
</dbReference>
<dbReference type="Pfam" id="PF07743">
    <property type="entry name" value="HSCB_C"/>
    <property type="match status" value="1"/>
</dbReference>
<dbReference type="SMART" id="SM00271">
    <property type="entry name" value="DnaJ"/>
    <property type="match status" value="1"/>
</dbReference>
<dbReference type="SUPFAM" id="SSF46565">
    <property type="entry name" value="Chaperone J-domain"/>
    <property type="match status" value="1"/>
</dbReference>
<dbReference type="SUPFAM" id="SSF47144">
    <property type="entry name" value="HSC20 (HSCB), C-terminal oligomerisation domain"/>
    <property type="match status" value="1"/>
</dbReference>
<dbReference type="PROSITE" id="PS50076">
    <property type="entry name" value="DNAJ_2"/>
    <property type="match status" value="1"/>
</dbReference>